<name>TTCA_ALIF1</name>
<evidence type="ECO:0000255" key="1">
    <source>
        <dbReference type="HAMAP-Rule" id="MF_01850"/>
    </source>
</evidence>
<gene>
    <name evidence="1" type="primary">ttcA</name>
    <name type="ordered locus">VF_1311</name>
</gene>
<organism>
    <name type="scientific">Aliivibrio fischeri (strain ATCC 700601 / ES114)</name>
    <name type="common">Vibrio fischeri</name>
    <dbReference type="NCBI Taxonomy" id="312309"/>
    <lineage>
        <taxon>Bacteria</taxon>
        <taxon>Pseudomonadati</taxon>
        <taxon>Pseudomonadota</taxon>
        <taxon>Gammaproteobacteria</taxon>
        <taxon>Vibrionales</taxon>
        <taxon>Vibrionaceae</taxon>
        <taxon>Aliivibrio</taxon>
    </lineage>
</organism>
<proteinExistence type="inferred from homology"/>
<reference key="1">
    <citation type="journal article" date="2005" name="Proc. Natl. Acad. Sci. U.S.A.">
        <title>Complete genome sequence of Vibrio fischeri: a symbiotic bacterium with pathogenic congeners.</title>
        <authorList>
            <person name="Ruby E.G."/>
            <person name="Urbanowski M."/>
            <person name="Campbell J."/>
            <person name="Dunn A."/>
            <person name="Faini M."/>
            <person name="Gunsalus R."/>
            <person name="Lostroh P."/>
            <person name="Lupp C."/>
            <person name="McCann J."/>
            <person name="Millikan D."/>
            <person name="Schaefer A."/>
            <person name="Stabb E."/>
            <person name="Stevens A."/>
            <person name="Visick K."/>
            <person name="Whistler C."/>
            <person name="Greenberg E.P."/>
        </authorList>
    </citation>
    <scope>NUCLEOTIDE SEQUENCE [LARGE SCALE GENOMIC DNA]</scope>
    <source>
        <strain>ATCC 700601 / ES114</strain>
    </source>
</reference>
<comment type="function">
    <text evidence="1">Catalyzes the ATP-dependent 2-thiolation of cytidine in position 32 of tRNA, to form 2-thiocytidine (s(2)C32). The sulfur atoms are provided by the cysteine/cysteine desulfurase (IscS) system.</text>
</comment>
<comment type="catalytic activity">
    <reaction evidence="1">
        <text>cytidine(32) in tRNA + S-sulfanyl-L-cysteinyl-[cysteine desulfurase] + AH2 + ATP = 2-thiocytidine(32) in tRNA + L-cysteinyl-[cysteine desulfurase] + A + AMP + diphosphate + H(+)</text>
        <dbReference type="Rhea" id="RHEA:57048"/>
        <dbReference type="Rhea" id="RHEA-COMP:10288"/>
        <dbReference type="Rhea" id="RHEA-COMP:12157"/>
        <dbReference type="Rhea" id="RHEA-COMP:12158"/>
        <dbReference type="Rhea" id="RHEA-COMP:14821"/>
        <dbReference type="ChEBI" id="CHEBI:13193"/>
        <dbReference type="ChEBI" id="CHEBI:15378"/>
        <dbReference type="ChEBI" id="CHEBI:17499"/>
        <dbReference type="ChEBI" id="CHEBI:29950"/>
        <dbReference type="ChEBI" id="CHEBI:30616"/>
        <dbReference type="ChEBI" id="CHEBI:33019"/>
        <dbReference type="ChEBI" id="CHEBI:61963"/>
        <dbReference type="ChEBI" id="CHEBI:82748"/>
        <dbReference type="ChEBI" id="CHEBI:141453"/>
        <dbReference type="ChEBI" id="CHEBI:456215"/>
    </reaction>
    <physiologicalReaction direction="left-to-right" evidence="1">
        <dbReference type="Rhea" id="RHEA:57049"/>
    </physiologicalReaction>
</comment>
<comment type="cofactor">
    <cofactor evidence="1">
        <name>Mg(2+)</name>
        <dbReference type="ChEBI" id="CHEBI:18420"/>
    </cofactor>
</comment>
<comment type="cofactor">
    <cofactor evidence="1">
        <name>[4Fe-4S] cluster</name>
        <dbReference type="ChEBI" id="CHEBI:49883"/>
    </cofactor>
    <text evidence="1">Binds 1 [4Fe-4S] cluster per subunit. The cluster is chelated by three Cys residues, the fourth Fe has a free coordination site that may bind a sulfur atom transferred from the persulfide of IscS.</text>
</comment>
<comment type="pathway">
    <text evidence="1">tRNA modification.</text>
</comment>
<comment type="subunit">
    <text evidence="1">Homodimer.</text>
</comment>
<comment type="subcellular location">
    <subcellularLocation>
        <location evidence="1">Cytoplasm</location>
    </subcellularLocation>
</comment>
<comment type="miscellaneous">
    <text evidence="1">The thiolation reaction likely consists of two steps: a first activation step by ATP to form an adenylated intermediate of the target base of tRNA, and a second nucleophilic substitution step of the sulfur (S) atom supplied by the hydrosulfide attached to the Fe-S cluster.</text>
</comment>
<comment type="similarity">
    <text evidence="1">Belongs to the TtcA family.</text>
</comment>
<feature type="chain" id="PRO_0000348863" description="tRNA-cytidine(32) 2-sulfurtransferase">
    <location>
        <begin position="1"/>
        <end position="307"/>
    </location>
</feature>
<feature type="short sequence motif" description="PP-loop motif" evidence="1">
    <location>
        <begin position="44"/>
        <end position="49"/>
    </location>
</feature>
<feature type="binding site" evidence="1">
    <location>
        <position position="119"/>
    </location>
    <ligand>
        <name>[4Fe-4S] cluster</name>
        <dbReference type="ChEBI" id="CHEBI:49883"/>
    </ligand>
</feature>
<feature type="binding site" evidence="1">
    <location>
        <position position="122"/>
    </location>
    <ligand>
        <name>[4Fe-4S] cluster</name>
        <dbReference type="ChEBI" id="CHEBI:49883"/>
    </ligand>
</feature>
<feature type="binding site" evidence="1">
    <location>
        <position position="210"/>
    </location>
    <ligand>
        <name>[4Fe-4S] cluster</name>
        <dbReference type="ChEBI" id="CHEBI:49883"/>
    </ligand>
</feature>
<dbReference type="EC" id="2.8.1.-" evidence="1"/>
<dbReference type="EMBL" id="CP000020">
    <property type="protein sequence ID" value="AAW85806.1"/>
    <property type="molecule type" value="Genomic_DNA"/>
</dbReference>
<dbReference type="RefSeq" id="WP_011261911.1">
    <property type="nucleotide sequence ID" value="NZ_CAWLES010000001.1"/>
</dbReference>
<dbReference type="RefSeq" id="YP_204694.1">
    <property type="nucleotide sequence ID" value="NC_006840.2"/>
</dbReference>
<dbReference type="SMR" id="Q5E590"/>
<dbReference type="STRING" id="312309.VF_1311"/>
<dbReference type="EnsemblBacteria" id="AAW85806">
    <property type="protein sequence ID" value="AAW85806"/>
    <property type="gene ID" value="VF_1311"/>
</dbReference>
<dbReference type="GeneID" id="54163981"/>
<dbReference type="KEGG" id="vfi:VF_1311"/>
<dbReference type="PATRIC" id="fig|312309.11.peg.1319"/>
<dbReference type="eggNOG" id="COG0037">
    <property type="taxonomic scope" value="Bacteria"/>
</dbReference>
<dbReference type="HOGENOM" id="CLU_026481_0_0_6"/>
<dbReference type="OrthoDB" id="9801054at2"/>
<dbReference type="Proteomes" id="UP000000537">
    <property type="component" value="Chromosome I"/>
</dbReference>
<dbReference type="GO" id="GO:0005737">
    <property type="term" value="C:cytoplasm"/>
    <property type="evidence" value="ECO:0007669"/>
    <property type="project" value="UniProtKB-SubCell"/>
</dbReference>
<dbReference type="GO" id="GO:0051539">
    <property type="term" value="F:4 iron, 4 sulfur cluster binding"/>
    <property type="evidence" value="ECO:0007669"/>
    <property type="project" value="UniProtKB-UniRule"/>
</dbReference>
<dbReference type="GO" id="GO:0005524">
    <property type="term" value="F:ATP binding"/>
    <property type="evidence" value="ECO:0007669"/>
    <property type="project" value="UniProtKB-UniRule"/>
</dbReference>
<dbReference type="GO" id="GO:0000287">
    <property type="term" value="F:magnesium ion binding"/>
    <property type="evidence" value="ECO:0007669"/>
    <property type="project" value="UniProtKB-UniRule"/>
</dbReference>
<dbReference type="GO" id="GO:0016783">
    <property type="term" value="F:sulfurtransferase activity"/>
    <property type="evidence" value="ECO:0007669"/>
    <property type="project" value="UniProtKB-UniRule"/>
</dbReference>
<dbReference type="GO" id="GO:0000049">
    <property type="term" value="F:tRNA binding"/>
    <property type="evidence" value="ECO:0007669"/>
    <property type="project" value="UniProtKB-KW"/>
</dbReference>
<dbReference type="GO" id="GO:0034227">
    <property type="term" value="P:tRNA thio-modification"/>
    <property type="evidence" value="ECO:0007669"/>
    <property type="project" value="UniProtKB-UniRule"/>
</dbReference>
<dbReference type="CDD" id="cd24138">
    <property type="entry name" value="TtcA-like"/>
    <property type="match status" value="1"/>
</dbReference>
<dbReference type="Gene3D" id="3.40.50.620">
    <property type="entry name" value="HUPs"/>
    <property type="match status" value="1"/>
</dbReference>
<dbReference type="HAMAP" id="MF_01850">
    <property type="entry name" value="TtcA"/>
    <property type="match status" value="1"/>
</dbReference>
<dbReference type="InterPro" id="IPR014729">
    <property type="entry name" value="Rossmann-like_a/b/a_fold"/>
</dbReference>
<dbReference type="InterPro" id="IPR011063">
    <property type="entry name" value="TilS/TtcA_N"/>
</dbReference>
<dbReference type="InterPro" id="IPR012089">
    <property type="entry name" value="tRNA_Cyd_32_2_STrfase"/>
</dbReference>
<dbReference type="InterPro" id="IPR035107">
    <property type="entry name" value="tRNA_thiolation_TtcA_Ctu1"/>
</dbReference>
<dbReference type="NCBIfam" id="NF007972">
    <property type="entry name" value="PRK10696.1"/>
    <property type="match status" value="1"/>
</dbReference>
<dbReference type="PANTHER" id="PTHR43686:SF1">
    <property type="entry name" value="AMINOTRAN_5 DOMAIN-CONTAINING PROTEIN"/>
    <property type="match status" value="1"/>
</dbReference>
<dbReference type="PANTHER" id="PTHR43686">
    <property type="entry name" value="SULFURTRANSFERASE-RELATED"/>
    <property type="match status" value="1"/>
</dbReference>
<dbReference type="Pfam" id="PF01171">
    <property type="entry name" value="ATP_bind_3"/>
    <property type="match status" value="1"/>
</dbReference>
<dbReference type="PIRSF" id="PIRSF004976">
    <property type="entry name" value="ATPase_YdaO"/>
    <property type="match status" value="1"/>
</dbReference>
<dbReference type="SUPFAM" id="SSF52402">
    <property type="entry name" value="Adenine nucleotide alpha hydrolases-like"/>
    <property type="match status" value="1"/>
</dbReference>
<accession>Q5E590</accession>
<protein>
    <recommendedName>
        <fullName evidence="1">tRNA-cytidine(32) 2-sulfurtransferase</fullName>
        <ecNumber evidence="1">2.8.1.-</ecNumber>
    </recommendedName>
    <alternativeName>
        <fullName evidence="1">Two-thiocytidine biosynthesis protein A</fullName>
    </alternativeName>
    <alternativeName>
        <fullName evidence="1">tRNA 2-thiocytidine biosynthesis protein TtcA</fullName>
    </alternativeName>
</protein>
<keyword id="KW-0004">4Fe-4S</keyword>
<keyword id="KW-0067">ATP-binding</keyword>
<keyword id="KW-0963">Cytoplasm</keyword>
<keyword id="KW-0408">Iron</keyword>
<keyword id="KW-0411">Iron-sulfur</keyword>
<keyword id="KW-0460">Magnesium</keyword>
<keyword id="KW-0479">Metal-binding</keyword>
<keyword id="KW-0547">Nucleotide-binding</keyword>
<keyword id="KW-1185">Reference proteome</keyword>
<keyword id="KW-0694">RNA-binding</keyword>
<keyword id="KW-0808">Transferase</keyword>
<keyword id="KW-0819">tRNA processing</keyword>
<keyword id="KW-0820">tRNA-binding</keyword>
<sequence length="307" mass="34701">MSELTKAQQYNFNKLQKKIRRNTGNAIADYNMIEDGDRIMVCLSGGKDSFTMLDILMSLKKSAPISFDLIAVNLDQKQPGFPAHILPEYLEKLGVEYKIVEEDTYSIVQDKIPEGKTTCSLCSRLRRGILYRTAKELGATKIALGHHRDDILETMFLNMFYGGKLKGMPPKLVSDNGEHVVIRPLAYCREKDIIKYADMRDYPIIPCNLCGSQPNMQRQNVKQMLNTWDKQFPGRIETMFTAMQNVVPSHLADFNTFDFKSINRDSGVINGGDIGFDKEEMPTLPVDADDAVAEFDPSLKLDVVNVD</sequence>